<accession>P06953</accession>
<feature type="chain" id="PRO_0000106564" description="Single-stranded DNA-binding protein">
    <location>
        <begin position="1"/>
        <end position="124"/>
    </location>
</feature>
<dbReference type="EMBL" id="M11813">
    <property type="protein sequence ID" value="AAA88475.1"/>
    <property type="molecule type" value="Genomic_DNA"/>
</dbReference>
<dbReference type="PIR" id="G24528">
    <property type="entry name" value="ERBP5A"/>
</dbReference>
<dbReference type="BMRB" id="P06953"/>
<dbReference type="Proteomes" id="UP000000855">
    <property type="component" value="Segment"/>
</dbReference>
<dbReference type="GO" id="GO:0003677">
    <property type="term" value="F:DNA binding"/>
    <property type="evidence" value="ECO:0007669"/>
    <property type="project" value="UniProtKB-KW"/>
</dbReference>
<dbReference type="GO" id="GO:0006260">
    <property type="term" value="P:DNA replication"/>
    <property type="evidence" value="ECO:0007669"/>
    <property type="project" value="UniProtKB-KW"/>
</dbReference>
<dbReference type="GO" id="GO:0039693">
    <property type="term" value="P:viral DNA genome replication"/>
    <property type="evidence" value="ECO:0007669"/>
    <property type="project" value="UniProtKB-KW"/>
</dbReference>
<dbReference type="InterPro" id="IPR035408">
    <property type="entry name" value="Phi29_Phage_SSB"/>
</dbReference>
<dbReference type="Pfam" id="PF17427">
    <property type="entry name" value="Phi29_Phage_SSB"/>
    <property type="match status" value="1"/>
</dbReference>
<organismHost>
    <name type="scientific">Bacillus subtilis</name>
    <dbReference type="NCBI Taxonomy" id="1423"/>
</organismHost>
<keyword id="KW-0235">DNA replication</keyword>
<keyword id="KW-0238">DNA-binding</keyword>
<keyword id="KW-0244">Early protein</keyword>
<keyword id="KW-1194">Viral DNA replication</keyword>
<comment type="function">
    <text evidence="1">Single-stranded DNA binding protein required for the elongation during viral DNA replication by strand displacement. Displaced viral DNA strands are transiently coated with the ssDNA-binding protein and therefore protected againt nucleases. The latter is then probably removed by the replisome that performs lagging strand synthesis or during the events that lead up to the recombination process. Has helix-destabilizing activity since it removes secondary structure from the ssDNA in replicative intermediates.</text>
</comment>
<comment type="subunit">
    <text evidence="1">Monomer.</text>
</comment>
<comment type="similarity">
    <text evidence="2">Belongs to the phi29likevirus single-strand-binding protein family.</text>
</comment>
<evidence type="ECO:0000250" key="1">
    <source>
        <dbReference type="UniProtKB" id="Q38504"/>
    </source>
</evidence>
<evidence type="ECO:0000305" key="2"/>
<sequence length="124" mass="13330">MENTNIVKATFDTETLEGQIKIFNAQTGGGQSFKNLPDGTIIEATAIAQYKQVSDTYGDAKEETVTTIFAADGSLYSAISKTVAEAASDLIDLVTRHKLETFKVKVVQGTSSKGNVFFSLQLSL</sequence>
<reference key="1">
    <citation type="journal article" date="1985" name="Gene">
        <title>Nucleotide sequence of the major early region of Bacillus subtilis phage PZA, a close relative of phi 29.</title>
        <authorList>
            <person name="Paces V."/>
            <person name="Vlcek C."/>
            <person name="Urbanek P."/>
            <person name="Hostomsky Z."/>
        </authorList>
    </citation>
    <scope>NUCLEOTIDE SEQUENCE [GENOMIC DNA]</scope>
</reference>
<organism>
    <name type="scientific">Bacillus phage PZA</name>
    <name type="common">Bacteriophage PZA</name>
    <dbReference type="NCBI Taxonomy" id="10757"/>
    <lineage>
        <taxon>Viruses</taxon>
        <taxon>Duplodnaviria</taxon>
        <taxon>Heunggongvirae</taxon>
        <taxon>Uroviricota</taxon>
        <taxon>Caudoviricetes</taxon>
        <taxon>Salasmaviridae</taxon>
        <taxon>Picovirinae</taxon>
        <taxon>Salasvirus</taxon>
        <taxon>Salasvirus PZA</taxon>
    </lineage>
</organism>
<gene>
    <name type="primary">5</name>
    <name type="synonym">5A</name>
</gene>
<proteinExistence type="inferred from homology"/>
<protein>
    <recommendedName>
        <fullName evidence="1">Single-stranded DNA-binding protein</fullName>
        <shortName evidence="1">SSB</shortName>
    </recommendedName>
    <alternativeName>
        <fullName evidence="1">Gene product 5</fullName>
        <shortName evidence="1">gp5</shortName>
    </alternativeName>
    <alternativeName>
        <fullName evidence="1">Protein p5</fullName>
    </alternativeName>
</protein>
<name>SSB_BPPZA</name>